<name>FBX48_MOUSE</name>
<evidence type="ECO:0000255" key="1">
    <source>
        <dbReference type="PROSITE-ProRule" id="PRU00080"/>
    </source>
</evidence>
<evidence type="ECO:0000256" key="2">
    <source>
        <dbReference type="SAM" id="MobiDB-lite"/>
    </source>
</evidence>
<evidence type="ECO:0000305" key="3"/>
<protein>
    <recommendedName>
        <fullName>F-box only protein 48</fullName>
    </recommendedName>
    <alternativeName>
        <fullName>F-box protein 48</fullName>
    </alternativeName>
</protein>
<dbReference type="EMBL" id="AK037835">
    <property type="protein sequence ID" value="BAC29883.1"/>
    <property type="molecule type" value="mRNA"/>
</dbReference>
<dbReference type="EMBL" id="AK041978">
    <property type="protein sequence ID" value="BAC31118.1"/>
    <property type="molecule type" value="mRNA"/>
</dbReference>
<dbReference type="EMBL" id="AL645532">
    <property type="status" value="NOT_ANNOTATED_CDS"/>
    <property type="molecule type" value="Genomic_DNA"/>
</dbReference>
<dbReference type="EMBL" id="BC125589">
    <property type="protein sequence ID" value="AAI25590.1"/>
    <property type="molecule type" value="mRNA"/>
</dbReference>
<dbReference type="EMBL" id="BC125591">
    <property type="protein sequence ID" value="AAI25592.1"/>
    <property type="molecule type" value="mRNA"/>
</dbReference>
<dbReference type="CCDS" id="CCDS24445.1"/>
<dbReference type="RefSeq" id="NP_001346091.1">
    <property type="nucleotide sequence ID" value="NM_001359162.1"/>
</dbReference>
<dbReference type="RefSeq" id="NP_795956.1">
    <property type="nucleotide sequence ID" value="NM_176982.2"/>
</dbReference>
<dbReference type="RefSeq" id="XP_006514791.1">
    <property type="nucleotide sequence ID" value="XM_006514728.5"/>
</dbReference>
<dbReference type="RefSeq" id="XP_006514792.1">
    <property type="nucleotide sequence ID" value="XM_006514729.3"/>
</dbReference>
<dbReference type="RefSeq" id="XP_006514794.1">
    <property type="nucleotide sequence ID" value="XM_006514731.5"/>
</dbReference>
<dbReference type="RefSeq" id="XP_006514795.1">
    <property type="nucleotide sequence ID" value="XM_006514732.5"/>
</dbReference>
<dbReference type="RefSeq" id="XP_011242028.1">
    <property type="nucleotide sequence ID" value="XM_011243726.4"/>
</dbReference>
<dbReference type="RefSeq" id="XP_017170091.1">
    <property type="nucleotide sequence ID" value="XM_017314602.3"/>
</dbReference>
<dbReference type="RefSeq" id="XP_017170092.1">
    <property type="nucleotide sequence ID" value="XM_017314603.3"/>
</dbReference>
<dbReference type="RefSeq" id="XP_017170093.1">
    <property type="nucleotide sequence ID" value="XM_017314604.3"/>
</dbReference>
<dbReference type="FunCoup" id="Q8CAT8">
    <property type="interactions" value="524"/>
</dbReference>
<dbReference type="STRING" id="10090.ENSMUSP00000057901"/>
<dbReference type="PhosphoSitePlus" id="Q8CAT8"/>
<dbReference type="PaxDb" id="10090-ENSMUSP00000057901"/>
<dbReference type="Antibodypedia" id="63770">
    <property type="antibodies" value="40 antibodies from 6 providers"/>
</dbReference>
<dbReference type="Ensembl" id="ENSMUST00000061327.2">
    <property type="protein sequence ID" value="ENSMUSP00000057901.2"/>
    <property type="gene ID" value="ENSMUSG00000044966.5"/>
</dbReference>
<dbReference type="Ensembl" id="ENSMUST00000109635.2">
    <property type="protein sequence ID" value="ENSMUSP00000105263.2"/>
    <property type="gene ID" value="ENSMUSG00000044966.5"/>
</dbReference>
<dbReference type="GeneID" id="319701"/>
<dbReference type="KEGG" id="mmu:319701"/>
<dbReference type="UCSC" id="uc007ibt.1">
    <property type="organism name" value="mouse"/>
</dbReference>
<dbReference type="AGR" id="MGI:2442569"/>
<dbReference type="CTD" id="554251"/>
<dbReference type="MGI" id="MGI:2442569">
    <property type="gene designation" value="Fbxo48"/>
</dbReference>
<dbReference type="VEuPathDB" id="HostDB:ENSMUSG00000044966"/>
<dbReference type="eggNOG" id="ENOG502S15Z">
    <property type="taxonomic scope" value="Eukaryota"/>
</dbReference>
<dbReference type="GeneTree" id="ENSGT00390000012248"/>
<dbReference type="HOGENOM" id="CLU_143592_0_0_1"/>
<dbReference type="InParanoid" id="Q8CAT8"/>
<dbReference type="OMA" id="IMCPMDA"/>
<dbReference type="OrthoDB" id="10257471at2759"/>
<dbReference type="PhylomeDB" id="Q8CAT8"/>
<dbReference type="TreeFam" id="TF332573"/>
<dbReference type="BioGRID-ORCS" id="319701">
    <property type="hits" value="1 hit in 77 CRISPR screens"/>
</dbReference>
<dbReference type="PRO" id="PR:Q8CAT8"/>
<dbReference type="Proteomes" id="UP000000589">
    <property type="component" value="Chromosome 11"/>
</dbReference>
<dbReference type="RNAct" id="Q8CAT8">
    <property type="molecule type" value="protein"/>
</dbReference>
<dbReference type="Bgee" id="ENSMUSG00000044966">
    <property type="expression patterns" value="Expressed in blastoderm cell in morula and 57 other cell types or tissues"/>
</dbReference>
<dbReference type="Gene3D" id="1.20.1280.50">
    <property type="match status" value="1"/>
</dbReference>
<dbReference type="InterPro" id="IPR036047">
    <property type="entry name" value="F-box-like_dom_sf"/>
</dbReference>
<dbReference type="InterPro" id="IPR001810">
    <property type="entry name" value="F-box_dom"/>
</dbReference>
<dbReference type="PANTHER" id="PTHR12874:SF9">
    <property type="entry name" value="F-BOX ONLY PROTEIN 48"/>
    <property type="match status" value="1"/>
</dbReference>
<dbReference type="PANTHER" id="PTHR12874">
    <property type="entry name" value="F-BOX ONLY PROTEIN 48-RELATED"/>
    <property type="match status" value="1"/>
</dbReference>
<dbReference type="Pfam" id="PF12937">
    <property type="entry name" value="F-box-like"/>
    <property type="match status" value="1"/>
</dbReference>
<dbReference type="SMART" id="SM00256">
    <property type="entry name" value="FBOX"/>
    <property type="match status" value="1"/>
</dbReference>
<dbReference type="SUPFAM" id="SSF81383">
    <property type="entry name" value="F-box domain"/>
    <property type="match status" value="1"/>
</dbReference>
<dbReference type="PROSITE" id="PS50181">
    <property type="entry name" value="FBOX"/>
    <property type="match status" value="1"/>
</dbReference>
<reference key="1">
    <citation type="journal article" date="2005" name="Science">
        <title>The transcriptional landscape of the mammalian genome.</title>
        <authorList>
            <person name="Carninci P."/>
            <person name="Kasukawa T."/>
            <person name="Katayama S."/>
            <person name="Gough J."/>
            <person name="Frith M.C."/>
            <person name="Maeda N."/>
            <person name="Oyama R."/>
            <person name="Ravasi T."/>
            <person name="Lenhard B."/>
            <person name="Wells C."/>
            <person name="Kodzius R."/>
            <person name="Shimokawa K."/>
            <person name="Bajic V.B."/>
            <person name="Brenner S.E."/>
            <person name="Batalov S."/>
            <person name="Forrest A.R."/>
            <person name="Zavolan M."/>
            <person name="Davis M.J."/>
            <person name="Wilming L.G."/>
            <person name="Aidinis V."/>
            <person name="Allen J.E."/>
            <person name="Ambesi-Impiombato A."/>
            <person name="Apweiler R."/>
            <person name="Aturaliya R.N."/>
            <person name="Bailey T.L."/>
            <person name="Bansal M."/>
            <person name="Baxter L."/>
            <person name="Beisel K.W."/>
            <person name="Bersano T."/>
            <person name="Bono H."/>
            <person name="Chalk A.M."/>
            <person name="Chiu K.P."/>
            <person name="Choudhary V."/>
            <person name="Christoffels A."/>
            <person name="Clutterbuck D.R."/>
            <person name="Crowe M.L."/>
            <person name="Dalla E."/>
            <person name="Dalrymple B.P."/>
            <person name="de Bono B."/>
            <person name="Della Gatta G."/>
            <person name="di Bernardo D."/>
            <person name="Down T."/>
            <person name="Engstrom P."/>
            <person name="Fagiolini M."/>
            <person name="Faulkner G."/>
            <person name="Fletcher C.F."/>
            <person name="Fukushima T."/>
            <person name="Furuno M."/>
            <person name="Futaki S."/>
            <person name="Gariboldi M."/>
            <person name="Georgii-Hemming P."/>
            <person name="Gingeras T.R."/>
            <person name="Gojobori T."/>
            <person name="Green R.E."/>
            <person name="Gustincich S."/>
            <person name="Harbers M."/>
            <person name="Hayashi Y."/>
            <person name="Hensch T.K."/>
            <person name="Hirokawa N."/>
            <person name="Hill D."/>
            <person name="Huminiecki L."/>
            <person name="Iacono M."/>
            <person name="Ikeo K."/>
            <person name="Iwama A."/>
            <person name="Ishikawa T."/>
            <person name="Jakt M."/>
            <person name="Kanapin A."/>
            <person name="Katoh M."/>
            <person name="Kawasawa Y."/>
            <person name="Kelso J."/>
            <person name="Kitamura H."/>
            <person name="Kitano H."/>
            <person name="Kollias G."/>
            <person name="Krishnan S.P."/>
            <person name="Kruger A."/>
            <person name="Kummerfeld S.K."/>
            <person name="Kurochkin I.V."/>
            <person name="Lareau L.F."/>
            <person name="Lazarevic D."/>
            <person name="Lipovich L."/>
            <person name="Liu J."/>
            <person name="Liuni S."/>
            <person name="McWilliam S."/>
            <person name="Madan Babu M."/>
            <person name="Madera M."/>
            <person name="Marchionni L."/>
            <person name="Matsuda H."/>
            <person name="Matsuzawa S."/>
            <person name="Miki H."/>
            <person name="Mignone F."/>
            <person name="Miyake S."/>
            <person name="Morris K."/>
            <person name="Mottagui-Tabar S."/>
            <person name="Mulder N."/>
            <person name="Nakano N."/>
            <person name="Nakauchi H."/>
            <person name="Ng P."/>
            <person name="Nilsson R."/>
            <person name="Nishiguchi S."/>
            <person name="Nishikawa S."/>
            <person name="Nori F."/>
            <person name="Ohara O."/>
            <person name="Okazaki Y."/>
            <person name="Orlando V."/>
            <person name="Pang K.C."/>
            <person name="Pavan W.J."/>
            <person name="Pavesi G."/>
            <person name="Pesole G."/>
            <person name="Petrovsky N."/>
            <person name="Piazza S."/>
            <person name="Reed J."/>
            <person name="Reid J.F."/>
            <person name="Ring B.Z."/>
            <person name="Ringwald M."/>
            <person name="Rost B."/>
            <person name="Ruan Y."/>
            <person name="Salzberg S.L."/>
            <person name="Sandelin A."/>
            <person name="Schneider C."/>
            <person name="Schoenbach C."/>
            <person name="Sekiguchi K."/>
            <person name="Semple C.A."/>
            <person name="Seno S."/>
            <person name="Sessa L."/>
            <person name="Sheng Y."/>
            <person name="Shibata Y."/>
            <person name="Shimada H."/>
            <person name="Shimada K."/>
            <person name="Silva D."/>
            <person name="Sinclair B."/>
            <person name="Sperling S."/>
            <person name="Stupka E."/>
            <person name="Sugiura K."/>
            <person name="Sultana R."/>
            <person name="Takenaka Y."/>
            <person name="Taki K."/>
            <person name="Tammoja K."/>
            <person name="Tan S.L."/>
            <person name="Tang S."/>
            <person name="Taylor M.S."/>
            <person name="Tegner J."/>
            <person name="Teichmann S.A."/>
            <person name="Ueda H.R."/>
            <person name="van Nimwegen E."/>
            <person name="Verardo R."/>
            <person name="Wei C.L."/>
            <person name="Yagi K."/>
            <person name="Yamanishi H."/>
            <person name="Zabarovsky E."/>
            <person name="Zhu S."/>
            <person name="Zimmer A."/>
            <person name="Hide W."/>
            <person name="Bult C."/>
            <person name="Grimmond S.M."/>
            <person name="Teasdale R.D."/>
            <person name="Liu E.T."/>
            <person name="Brusic V."/>
            <person name="Quackenbush J."/>
            <person name="Wahlestedt C."/>
            <person name="Mattick J.S."/>
            <person name="Hume D.A."/>
            <person name="Kai C."/>
            <person name="Sasaki D."/>
            <person name="Tomaru Y."/>
            <person name="Fukuda S."/>
            <person name="Kanamori-Katayama M."/>
            <person name="Suzuki M."/>
            <person name="Aoki J."/>
            <person name="Arakawa T."/>
            <person name="Iida J."/>
            <person name="Imamura K."/>
            <person name="Itoh M."/>
            <person name="Kato T."/>
            <person name="Kawaji H."/>
            <person name="Kawagashira N."/>
            <person name="Kawashima T."/>
            <person name="Kojima M."/>
            <person name="Kondo S."/>
            <person name="Konno H."/>
            <person name="Nakano K."/>
            <person name="Ninomiya N."/>
            <person name="Nishio T."/>
            <person name="Okada M."/>
            <person name="Plessy C."/>
            <person name="Shibata K."/>
            <person name="Shiraki T."/>
            <person name="Suzuki S."/>
            <person name="Tagami M."/>
            <person name="Waki K."/>
            <person name="Watahiki A."/>
            <person name="Okamura-Oho Y."/>
            <person name="Suzuki H."/>
            <person name="Kawai J."/>
            <person name="Hayashizaki Y."/>
        </authorList>
    </citation>
    <scope>NUCLEOTIDE SEQUENCE [LARGE SCALE MRNA]</scope>
    <source>
        <strain>C57BL/6J</strain>
        <tissue>Thymus</tissue>
    </source>
</reference>
<reference key="2">
    <citation type="journal article" date="2009" name="PLoS Biol.">
        <title>Lineage-specific biology revealed by a finished genome assembly of the mouse.</title>
        <authorList>
            <person name="Church D.M."/>
            <person name="Goodstadt L."/>
            <person name="Hillier L.W."/>
            <person name="Zody M.C."/>
            <person name="Goldstein S."/>
            <person name="She X."/>
            <person name="Bult C.J."/>
            <person name="Agarwala R."/>
            <person name="Cherry J.L."/>
            <person name="DiCuccio M."/>
            <person name="Hlavina W."/>
            <person name="Kapustin Y."/>
            <person name="Meric P."/>
            <person name="Maglott D."/>
            <person name="Birtle Z."/>
            <person name="Marques A.C."/>
            <person name="Graves T."/>
            <person name="Zhou S."/>
            <person name="Teague B."/>
            <person name="Potamousis K."/>
            <person name="Churas C."/>
            <person name="Place M."/>
            <person name="Herschleb J."/>
            <person name="Runnheim R."/>
            <person name="Forrest D."/>
            <person name="Amos-Landgraf J."/>
            <person name="Schwartz D.C."/>
            <person name="Cheng Z."/>
            <person name="Lindblad-Toh K."/>
            <person name="Eichler E.E."/>
            <person name="Ponting C.P."/>
        </authorList>
    </citation>
    <scope>NUCLEOTIDE SEQUENCE [LARGE SCALE GENOMIC DNA]</scope>
    <source>
        <strain>C57BL/6J</strain>
    </source>
</reference>
<reference key="3">
    <citation type="journal article" date="2004" name="Genome Res.">
        <title>The status, quality, and expansion of the NIH full-length cDNA project: the Mammalian Gene Collection (MGC).</title>
        <authorList>
            <consortium name="The MGC Project Team"/>
        </authorList>
    </citation>
    <scope>NUCLEOTIDE SEQUENCE [LARGE SCALE MRNA]</scope>
</reference>
<accession>Q8CAT8</accession>
<accession>Q8C9J8</accession>
<keyword id="KW-1185">Reference proteome</keyword>
<proteinExistence type="evidence at transcript level"/>
<gene>
    <name type="primary">Fbxo48</name>
    <name type="synonym">Fbx48</name>
</gene>
<sequence length="161" mass="18762">MKKTSKKNNNFKIPGTELNSADAERGKEESQRNFVELLPLEVTYKIFSQLDIQSLCRASRTCTGWNCAIRNNDSLWKPHCLTIRAVCQREIDDDIKSGYTWRVILLRNYQKSKVKYEWLSGRYSNIRSPVNLPEKAMCPMDADTWGEILDAELEREVEKLQ</sequence>
<feature type="chain" id="PRO_0000335678" description="F-box only protein 48">
    <location>
        <begin position="1"/>
        <end position="161"/>
    </location>
</feature>
<feature type="domain" description="F-box" evidence="1">
    <location>
        <begin position="32"/>
        <end position="79"/>
    </location>
</feature>
<feature type="region of interest" description="Disordered" evidence="2">
    <location>
        <begin position="1"/>
        <end position="25"/>
    </location>
</feature>
<feature type="sequence conflict" description="In Ref. 1; BAC31118." evidence="3" ref="1">
    <original>H</original>
    <variation>N</variation>
    <location>
        <position position="79"/>
    </location>
</feature>
<organism>
    <name type="scientific">Mus musculus</name>
    <name type="common">Mouse</name>
    <dbReference type="NCBI Taxonomy" id="10090"/>
    <lineage>
        <taxon>Eukaryota</taxon>
        <taxon>Metazoa</taxon>
        <taxon>Chordata</taxon>
        <taxon>Craniata</taxon>
        <taxon>Vertebrata</taxon>
        <taxon>Euteleostomi</taxon>
        <taxon>Mammalia</taxon>
        <taxon>Eutheria</taxon>
        <taxon>Euarchontoglires</taxon>
        <taxon>Glires</taxon>
        <taxon>Rodentia</taxon>
        <taxon>Myomorpha</taxon>
        <taxon>Muroidea</taxon>
        <taxon>Muridae</taxon>
        <taxon>Murinae</taxon>
        <taxon>Mus</taxon>
        <taxon>Mus</taxon>
    </lineage>
</organism>